<evidence type="ECO:0000256" key="1">
    <source>
        <dbReference type="SAM" id="MobiDB-lite"/>
    </source>
</evidence>
<evidence type="ECO:0000269" key="2">
    <source>
    </source>
</evidence>
<evidence type="ECO:0000305" key="3"/>
<comment type="subcellular location">
    <subcellularLocation>
        <location evidence="2">Secreted</location>
    </subcellularLocation>
    <text evidence="3">Secreted via type III secretion system (T3SS).</text>
</comment>
<comment type="similarity">
    <text evidence="3">Belongs to the HopW family.</text>
</comment>
<sequence length="914" mass="97211">MMPSQITRSSHSSLPEVAPASGDAAGVSEQTPQQARTVAFFASGELAVAFGRTSTAPAQDSVRLLSALQRELDKQQPSWPTVAQLCHSLAEVAKTEQGWHQLASEDQAPAPALKDLLERCIGRLADMPASHASHDSLSLACEGLRTARLHQSVARLTARPPALARAIPDLLALTHLDPETLGAEPPVVSSYTLFSHFVHTAKQRTAELNDSLQRQPEAVVSLLRSHADTLNDLETLPGALQALTENCQDAPACNELRELAEVVGALLQLLREHGILPRLEAISIEPGEAPAPGHEAAEPRLTRSQALLKAGGNLVRKFDAYGALAPMDDKGLLALMRTPAPHLSPDQMHAFLNKHVLHLTQEQRDIVSNTPLPFAPEGDIEARCGMGFDEKLRLALANGSLVLSEEQLARLGHLPSAATTTSDVVKTLLEKPSSALSEAERDMLGAIVQANGQGQLDAWRAHNEQLPAVLSRSGLPSDVKDELLSLNQSMNAELGTLKNGASFKSRILASPAMLLALAPLPLAVAFVSKDNSYSSSLVAHFTKNAVFMAGLMMNELTNARTNVDHGLNRYFVTVLANAIVAQPTFARNEHLLEQVGFGIATAVASGAATLGVFNRESIVAAFKLAKSKLSRQDTGNASIPEEDHLAVVRHFDVSEHFAQQMKVATELYKQDKSITDIMNSSLTYLGTKSSEFQARFESVDALRAGLQLAEGERKADPDFYTKLGLVALTASIGAALVMLMKSMVGKADYAADGVWCVSEMLKLAMNPEVDMQKAVQVFKEIVGLNLVMTGFLGVNKVWNFLDKGIKGYASGAAVLTAANLTLPGMVGEVAGAAAGKGLSYLTDKGKAAHQAGRAAASWAGNYVGTSRLGSAVGTLQTAIPGRIAGGQVVAGLYDRFRYLTGSHPTPAQQAAGEP</sequence>
<protein>
    <recommendedName>
        <fullName>Effector protein hopAE1</fullName>
    </recommendedName>
    <alternativeName>
        <fullName>Type III effector holPsyAE</fullName>
    </alternativeName>
</protein>
<feature type="chain" id="PRO_0000245646" description="Effector protein hopAE1">
    <location>
        <begin position="1"/>
        <end position="914"/>
    </location>
</feature>
<feature type="region of interest" description="Disordered" evidence="1">
    <location>
        <begin position="1"/>
        <end position="31"/>
    </location>
</feature>
<feature type="compositionally biased region" description="Polar residues" evidence="1">
    <location>
        <begin position="1"/>
        <end position="13"/>
    </location>
</feature>
<gene>
    <name type="primary">hopAE1</name>
    <name type="synonym">holPsyAE</name>
    <name type="ordered locus">Psyr_4269</name>
</gene>
<name>HOAE1_PSEU2</name>
<dbReference type="EMBL" id="BK000956">
    <property type="protein sequence ID" value="DAA00391.1"/>
    <property type="molecule type" value="Genomic_DNA"/>
</dbReference>
<dbReference type="EMBL" id="CP000075">
    <property type="protein sequence ID" value="AAY39299.1"/>
    <property type="molecule type" value="Genomic_DNA"/>
</dbReference>
<dbReference type="RefSeq" id="WP_011268930.1">
    <property type="nucleotide sequence ID" value="NC_007005.1"/>
</dbReference>
<dbReference type="RefSeq" id="YP_237337.1">
    <property type="nucleotide sequence ID" value="NC_007005.1"/>
</dbReference>
<dbReference type="SMR" id="Q7PC62"/>
<dbReference type="STRING" id="205918.Psyr_4269"/>
<dbReference type="KEGG" id="psb:Psyr_4269"/>
<dbReference type="PATRIC" id="fig|205918.7.peg.4405"/>
<dbReference type="eggNOG" id="ENOG50338PH">
    <property type="taxonomic scope" value="Bacteria"/>
</dbReference>
<dbReference type="HOGENOM" id="CLU_318813_0_0_6"/>
<dbReference type="OrthoDB" id="7007472at2"/>
<dbReference type="PHI-base" id="PHI:995"/>
<dbReference type="Proteomes" id="UP000000426">
    <property type="component" value="Chromosome"/>
</dbReference>
<dbReference type="GO" id="GO:0005576">
    <property type="term" value="C:extracellular region"/>
    <property type="evidence" value="ECO:0007669"/>
    <property type="project" value="UniProtKB-SubCell"/>
</dbReference>
<dbReference type="InterPro" id="IPR029378">
    <property type="entry name" value="T3SS_HopW1-1/HolPsyAE"/>
</dbReference>
<dbReference type="Pfam" id="PF15457">
    <property type="entry name" value="HopW1-1"/>
    <property type="match status" value="1"/>
</dbReference>
<organism>
    <name type="scientific">Pseudomonas syringae pv. syringae (strain B728a)</name>
    <dbReference type="NCBI Taxonomy" id="205918"/>
    <lineage>
        <taxon>Bacteria</taxon>
        <taxon>Pseudomonadati</taxon>
        <taxon>Pseudomonadota</taxon>
        <taxon>Gammaproteobacteria</taxon>
        <taxon>Pseudomonadales</taxon>
        <taxon>Pseudomonadaceae</taxon>
        <taxon>Pseudomonas</taxon>
        <taxon>Pseudomonas syringae</taxon>
    </lineage>
</organism>
<reference key="1">
    <citation type="journal article" date="2003" name="Curr. Opin. Microbiol.">
        <title>Identifying type III effectors of plant pathogens and analyzing their interaction with plant cells.</title>
        <authorList>
            <person name="Greenberg J.T."/>
            <person name="Vinatzer B.A."/>
        </authorList>
    </citation>
    <scope>NUCLEOTIDE SEQUENCE [GENOMIC DNA]</scope>
    <scope>SUBCELLULAR LOCATION</scope>
</reference>
<reference key="2">
    <citation type="journal article" date="2005" name="Proc. Natl. Acad. Sci. U.S.A.">
        <title>Comparison of the complete genome sequences of Pseudomonas syringae pv. syringae B728a and pv. tomato DC3000.</title>
        <authorList>
            <person name="Feil H."/>
            <person name="Feil W.S."/>
            <person name="Chain P."/>
            <person name="Larimer F."/>
            <person name="Dibartolo G."/>
            <person name="Copeland A."/>
            <person name="Lykidis A."/>
            <person name="Trong S."/>
            <person name="Nolan M."/>
            <person name="Goltsman E."/>
            <person name="Thiel J."/>
            <person name="Malfatti S."/>
            <person name="Loper J.E."/>
            <person name="Lapidus A."/>
            <person name="Detter J.C."/>
            <person name="Land M."/>
            <person name="Richardson P.M."/>
            <person name="Kyrpides N.C."/>
            <person name="Ivanova N."/>
            <person name="Lindow S.E."/>
        </authorList>
    </citation>
    <scope>NUCLEOTIDE SEQUENCE [LARGE SCALE GENOMIC DNA]</scope>
    <source>
        <strain>B728a</strain>
    </source>
</reference>
<accession>Q7PC62</accession>
<proteinExistence type="inferred from homology"/>
<keyword id="KW-0964">Secreted</keyword>